<organism>
    <name type="scientific">Aspergillus oryzae (strain ATCC 42149 / RIB 40)</name>
    <name type="common">Yellow koji mold</name>
    <dbReference type="NCBI Taxonomy" id="510516"/>
    <lineage>
        <taxon>Eukaryota</taxon>
        <taxon>Fungi</taxon>
        <taxon>Dikarya</taxon>
        <taxon>Ascomycota</taxon>
        <taxon>Pezizomycotina</taxon>
        <taxon>Eurotiomycetes</taxon>
        <taxon>Eurotiomycetidae</taxon>
        <taxon>Eurotiales</taxon>
        <taxon>Aspergillaceae</taxon>
        <taxon>Aspergillus</taxon>
        <taxon>Aspergillus subgen. Circumdati</taxon>
    </lineage>
</organism>
<gene>
    <name type="ORF">AO090003000839</name>
</gene>
<protein>
    <recommendedName>
        <fullName>Patatin-like phospholipase domain-containing protein AO090003000839</fullName>
        <ecNumber>3.1.1.-</ecNumber>
    </recommendedName>
</protein>
<reference key="1">
    <citation type="journal article" date="2005" name="Nature">
        <title>Genome sequencing and analysis of Aspergillus oryzae.</title>
        <authorList>
            <person name="Machida M."/>
            <person name="Asai K."/>
            <person name="Sano M."/>
            <person name="Tanaka T."/>
            <person name="Kumagai T."/>
            <person name="Terai G."/>
            <person name="Kusumoto K."/>
            <person name="Arima T."/>
            <person name="Akita O."/>
            <person name="Kashiwagi Y."/>
            <person name="Abe K."/>
            <person name="Gomi K."/>
            <person name="Horiuchi H."/>
            <person name="Kitamoto K."/>
            <person name="Kobayashi T."/>
            <person name="Takeuchi M."/>
            <person name="Denning D.W."/>
            <person name="Galagan J.E."/>
            <person name="Nierman W.C."/>
            <person name="Yu J."/>
            <person name="Archer D.B."/>
            <person name="Bennett J.W."/>
            <person name="Bhatnagar D."/>
            <person name="Cleveland T.E."/>
            <person name="Fedorova N.D."/>
            <person name="Gotoh O."/>
            <person name="Horikawa H."/>
            <person name="Hosoyama A."/>
            <person name="Ichinomiya M."/>
            <person name="Igarashi R."/>
            <person name="Iwashita K."/>
            <person name="Juvvadi P.R."/>
            <person name="Kato M."/>
            <person name="Kato Y."/>
            <person name="Kin T."/>
            <person name="Kokubun A."/>
            <person name="Maeda H."/>
            <person name="Maeyama N."/>
            <person name="Maruyama J."/>
            <person name="Nagasaki H."/>
            <person name="Nakajima T."/>
            <person name="Oda K."/>
            <person name="Okada K."/>
            <person name="Paulsen I."/>
            <person name="Sakamoto K."/>
            <person name="Sawano T."/>
            <person name="Takahashi M."/>
            <person name="Takase K."/>
            <person name="Terabayashi Y."/>
            <person name="Wortman J.R."/>
            <person name="Yamada O."/>
            <person name="Yamagata Y."/>
            <person name="Anazawa H."/>
            <person name="Hata Y."/>
            <person name="Koide Y."/>
            <person name="Komori T."/>
            <person name="Koyama Y."/>
            <person name="Minetoki T."/>
            <person name="Suharnan S."/>
            <person name="Tanaka A."/>
            <person name="Isono K."/>
            <person name="Kuhara S."/>
            <person name="Ogasawara N."/>
            <person name="Kikuchi H."/>
        </authorList>
    </citation>
    <scope>NUCLEOTIDE SEQUENCE [LARGE SCALE GENOMIC DNA]</scope>
    <source>
        <strain>ATCC 42149 / RIB 40</strain>
    </source>
</reference>
<accession>Q2UKE6</accession>
<feature type="chain" id="PRO_0000295552" description="Patatin-like phospholipase domain-containing protein AO090003000839">
    <location>
        <begin position="1"/>
        <end position="717"/>
    </location>
</feature>
<feature type="transmembrane region" description="Helical" evidence="2">
    <location>
        <begin position="87"/>
        <end position="107"/>
    </location>
</feature>
<feature type="domain" description="PNPLA" evidence="3">
    <location>
        <begin position="277"/>
        <end position="468"/>
    </location>
</feature>
<feature type="region of interest" description="Disordered" evidence="4">
    <location>
        <begin position="620"/>
        <end position="696"/>
    </location>
</feature>
<feature type="short sequence motif" description="GXSXG" evidence="3">
    <location>
        <begin position="308"/>
        <end position="312"/>
    </location>
</feature>
<feature type="compositionally biased region" description="Basic and acidic residues" evidence="4">
    <location>
        <begin position="639"/>
        <end position="658"/>
    </location>
</feature>
<feature type="compositionally biased region" description="Low complexity" evidence="4">
    <location>
        <begin position="660"/>
        <end position="673"/>
    </location>
</feature>
<feature type="active site" description="Nucleophile" evidence="3">
    <location>
        <position position="310"/>
    </location>
</feature>
<feature type="active site" description="Proton acceptor" evidence="3">
    <location>
        <position position="455"/>
    </location>
</feature>
<name>PLPL_ASPOR</name>
<comment type="function">
    <text evidence="1">Probable lipid hydrolase.</text>
</comment>
<comment type="subcellular location">
    <subcellularLocation>
        <location evidence="5">Membrane</location>
        <topology evidence="5">Single-pass membrane protein</topology>
    </subcellularLocation>
</comment>
<comment type="similarity">
    <text evidence="5">Belongs to the PLPL family.</text>
</comment>
<keyword id="KW-0378">Hydrolase</keyword>
<keyword id="KW-0442">Lipid degradation</keyword>
<keyword id="KW-0443">Lipid metabolism</keyword>
<keyword id="KW-0472">Membrane</keyword>
<keyword id="KW-1185">Reference proteome</keyword>
<keyword id="KW-0812">Transmembrane</keyword>
<keyword id="KW-1133">Transmembrane helix</keyword>
<evidence type="ECO:0000250" key="1"/>
<evidence type="ECO:0000255" key="2"/>
<evidence type="ECO:0000255" key="3">
    <source>
        <dbReference type="PROSITE-ProRule" id="PRU01161"/>
    </source>
</evidence>
<evidence type="ECO:0000256" key="4">
    <source>
        <dbReference type="SAM" id="MobiDB-lite"/>
    </source>
</evidence>
<evidence type="ECO:0000305" key="5"/>
<sequence length="717" mass="82365">MNSPEKSAACDIYDPKSIPDYDREFIDPDDLRQFENALNDNESNSLVALNDWRPIYQRVRKNRGRRKKPRRTTDETREGVLYTVLKWPFLFIVFGWITVLGFAYALTRFYIVLYERWVSWRGKKESLRRELWKQTDYNNWLKAAQALDNHLGNQQWKEIDEYAYYDHLTINKLVNQLRKARTDVELQMRNGVSSSTVIPATEELCALLEGCVKNNFAGVENPRLYSETYSGTKNLVQEYIDEVEKCIQVVSNNKWVSNEDKYHHFKHLDTNFGRTALCLSGGATFAYYHFGVARALLDNGVLPEIITGTSGGALVAALIATRTDEELKQLLVPALAHRIRASSEGMASWIWRWWRTGARFDTITWARECSWFCRGSTTFKEAYERTGRILNVSCVPSDPHSPTILANYLTSPNCVIWSAVLASAAVPGILNPVVLMTKKRDGTLAPYSFGHKWKDGSLRTDIPIRALNLHFNVNFPIVSQVNPHINLFFFSSRGSVGRPVTHRRGRGWRGGFLGSAIEQYIKLDLNKWLRVLRHLELLPRPLGQDWSEIWLQKFSGTITIWPKTIPSDFYYILSDPTPERLARMLNVGQQSAFPMIQFIKNRLKIENAILKGLHQYSPAVSPAQSRRKRGHAGKPSDPMVERLDHNLPDRQPDNKEDLSDSSGIDSNVSSRDSCLQPSSNRRNRRRSTGNIFQEMRRQSAVFFDDSDLYAEDDKKVE</sequence>
<dbReference type="EC" id="3.1.1.-"/>
<dbReference type="EMBL" id="BA000050">
    <property type="protein sequence ID" value="BAE57969.1"/>
    <property type="molecule type" value="Genomic_DNA"/>
</dbReference>
<dbReference type="RefSeq" id="XP_001819971.1">
    <property type="nucleotide sequence ID" value="XM_001819919.3"/>
</dbReference>
<dbReference type="EnsemblFungi" id="BAE57969">
    <property type="protein sequence ID" value="BAE57969"/>
    <property type="gene ID" value="AO090003000839"/>
</dbReference>
<dbReference type="GeneID" id="5991954"/>
<dbReference type="KEGG" id="aor:AO090003000839"/>
<dbReference type="HOGENOM" id="CLU_009031_2_2_1"/>
<dbReference type="OMA" id="CSWFTRG"/>
<dbReference type="OrthoDB" id="43753at5052"/>
<dbReference type="Proteomes" id="UP000006564">
    <property type="component" value="Chromosome 2"/>
</dbReference>
<dbReference type="GO" id="GO:0005811">
    <property type="term" value="C:lipid droplet"/>
    <property type="evidence" value="ECO:0007669"/>
    <property type="project" value="EnsemblFungi"/>
</dbReference>
<dbReference type="GO" id="GO:0016020">
    <property type="term" value="C:membrane"/>
    <property type="evidence" value="ECO:0007669"/>
    <property type="project" value="UniProtKB-SubCell"/>
</dbReference>
<dbReference type="GO" id="GO:0004806">
    <property type="term" value="F:triacylglycerol lipase activity"/>
    <property type="evidence" value="ECO:0007669"/>
    <property type="project" value="EnsemblFungi"/>
</dbReference>
<dbReference type="GO" id="GO:1990748">
    <property type="term" value="P:cellular detoxification"/>
    <property type="evidence" value="ECO:0007669"/>
    <property type="project" value="EnsemblFungi"/>
</dbReference>
<dbReference type="GO" id="GO:0016042">
    <property type="term" value="P:lipid catabolic process"/>
    <property type="evidence" value="ECO:0007669"/>
    <property type="project" value="UniProtKB-KW"/>
</dbReference>
<dbReference type="GO" id="GO:0006642">
    <property type="term" value="P:triglyceride mobilization"/>
    <property type="evidence" value="ECO:0007669"/>
    <property type="project" value="EnsemblFungi"/>
</dbReference>
<dbReference type="CDD" id="cd07232">
    <property type="entry name" value="Pat_PLPL"/>
    <property type="match status" value="1"/>
</dbReference>
<dbReference type="Gene3D" id="3.40.1090.10">
    <property type="entry name" value="Cytosolic phospholipase A2 catalytic domain"/>
    <property type="match status" value="2"/>
</dbReference>
<dbReference type="InterPro" id="IPR016035">
    <property type="entry name" value="Acyl_Trfase/lysoPLipase"/>
</dbReference>
<dbReference type="InterPro" id="IPR050301">
    <property type="entry name" value="NTE"/>
</dbReference>
<dbReference type="InterPro" id="IPR002641">
    <property type="entry name" value="PNPLA_dom"/>
</dbReference>
<dbReference type="InterPro" id="IPR021771">
    <property type="entry name" value="Triacylglycerol_lipase_N"/>
</dbReference>
<dbReference type="PANTHER" id="PTHR14226">
    <property type="entry name" value="NEUROPATHY TARGET ESTERASE/SWISS CHEESE D.MELANOGASTER"/>
    <property type="match status" value="1"/>
</dbReference>
<dbReference type="PANTHER" id="PTHR14226:SF66">
    <property type="entry name" value="TRIACYLGLYCEROL LIPASE PTL2"/>
    <property type="match status" value="1"/>
</dbReference>
<dbReference type="Pfam" id="PF11815">
    <property type="entry name" value="DUF3336"/>
    <property type="match status" value="1"/>
</dbReference>
<dbReference type="Pfam" id="PF01734">
    <property type="entry name" value="Patatin"/>
    <property type="match status" value="1"/>
</dbReference>
<dbReference type="SUPFAM" id="SSF52151">
    <property type="entry name" value="FabD/lysophospholipase-like"/>
    <property type="match status" value="1"/>
</dbReference>
<dbReference type="PROSITE" id="PS51635">
    <property type="entry name" value="PNPLA"/>
    <property type="match status" value="1"/>
</dbReference>
<proteinExistence type="inferred from homology"/>